<reference key="1">
    <citation type="journal article" date="2010" name="Genome Biol. Evol.">
        <title>Continuing evolution of Burkholderia mallei through genome reduction and large-scale rearrangements.</title>
        <authorList>
            <person name="Losada L."/>
            <person name="Ronning C.M."/>
            <person name="DeShazer D."/>
            <person name="Woods D."/>
            <person name="Fedorova N."/>
            <person name="Kim H.S."/>
            <person name="Shabalina S.A."/>
            <person name="Pearson T.R."/>
            <person name="Brinkac L."/>
            <person name="Tan P."/>
            <person name="Nandi T."/>
            <person name="Crabtree J."/>
            <person name="Badger J."/>
            <person name="Beckstrom-Sternberg S."/>
            <person name="Saqib M."/>
            <person name="Schutzer S.E."/>
            <person name="Keim P."/>
            <person name="Nierman W.C."/>
        </authorList>
    </citation>
    <scope>NUCLEOTIDE SEQUENCE [LARGE SCALE GENOMIC DNA]</scope>
    <source>
        <strain>1106a</strain>
    </source>
</reference>
<protein>
    <recommendedName>
        <fullName evidence="1">Acetyl-coenzyme A carboxylase carboxyl transferase subunit alpha</fullName>
        <shortName evidence="1">ACCase subunit alpha</shortName>
        <shortName evidence="1">Acetyl-CoA carboxylase carboxyltransferase subunit alpha</shortName>
        <ecNumber evidence="1">2.1.3.15</ecNumber>
    </recommendedName>
</protein>
<comment type="function">
    <text evidence="1">Component of the acetyl coenzyme A carboxylase (ACC) complex. First, biotin carboxylase catalyzes the carboxylation of biotin on its carrier protein (BCCP) and then the CO(2) group is transferred by the carboxyltransferase to acetyl-CoA to form malonyl-CoA.</text>
</comment>
<comment type="catalytic activity">
    <reaction evidence="1">
        <text>N(6)-carboxybiotinyl-L-lysyl-[protein] + acetyl-CoA = N(6)-biotinyl-L-lysyl-[protein] + malonyl-CoA</text>
        <dbReference type="Rhea" id="RHEA:54728"/>
        <dbReference type="Rhea" id="RHEA-COMP:10505"/>
        <dbReference type="Rhea" id="RHEA-COMP:10506"/>
        <dbReference type="ChEBI" id="CHEBI:57288"/>
        <dbReference type="ChEBI" id="CHEBI:57384"/>
        <dbReference type="ChEBI" id="CHEBI:83144"/>
        <dbReference type="ChEBI" id="CHEBI:83145"/>
        <dbReference type="EC" id="2.1.3.15"/>
    </reaction>
</comment>
<comment type="pathway">
    <text evidence="1">Lipid metabolism; malonyl-CoA biosynthesis; malonyl-CoA from acetyl-CoA: step 1/1.</text>
</comment>
<comment type="subunit">
    <text evidence="1">Acetyl-CoA carboxylase is a heterohexamer composed of biotin carboxyl carrier protein (AccB), biotin carboxylase (AccC) and two subunits each of ACCase subunit alpha (AccA) and ACCase subunit beta (AccD).</text>
</comment>
<comment type="subcellular location">
    <subcellularLocation>
        <location evidence="1">Cytoplasm</location>
    </subcellularLocation>
</comment>
<comment type="similarity">
    <text evidence="1">Belongs to the AccA family.</text>
</comment>
<keyword id="KW-0067">ATP-binding</keyword>
<keyword id="KW-0963">Cytoplasm</keyword>
<keyword id="KW-0275">Fatty acid biosynthesis</keyword>
<keyword id="KW-0276">Fatty acid metabolism</keyword>
<keyword id="KW-0444">Lipid biosynthesis</keyword>
<keyword id="KW-0443">Lipid metabolism</keyword>
<keyword id="KW-0547">Nucleotide-binding</keyword>
<keyword id="KW-0808">Transferase</keyword>
<accession>A3NWX6</accession>
<organism>
    <name type="scientific">Burkholderia pseudomallei (strain 1106a)</name>
    <dbReference type="NCBI Taxonomy" id="357348"/>
    <lineage>
        <taxon>Bacteria</taxon>
        <taxon>Pseudomonadati</taxon>
        <taxon>Pseudomonadota</taxon>
        <taxon>Betaproteobacteria</taxon>
        <taxon>Burkholderiales</taxon>
        <taxon>Burkholderiaceae</taxon>
        <taxon>Burkholderia</taxon>
        <taxon>pseudomallei group</taxon>
    </lineage>
</organism>
<gene>
    <name evidence="1" type="primary">accA</name>
    <name type="ordered locus">BURPS1106A_2594</name>
</gene>
<name>ACCA_BURP0</name>
<evidence type="ECO:0000255" key="1">
    <source>
        <dbReference type="HAMAP-Rule" id="MF_00823"/>
    </source>
</evidence>
<evidence type="ECO:0000255" key="2">
    <source>
        <dbReference type="PROSITE-ProRule" id="PRU01137"/>
    </source>
</evidence>
<feature type="chain" id="PRO_1000062591" description="Acetyl-coenzyme A carboxylase carboxyl transferase subunit alpha">
    <location>
        <begin position="1"/>
        <end position="323"/>
    </location>
</feature>
<feature type="domain" description="CoA carboxyltransferase C-terminal" evidence="2">
    <location>
        <begin position="39"/>
        <end position="293"/>
    </location>
</feature>
<proteinExistence type="inferred from homology"/>
<dbReference type="EC" id="2.1.3.15" evidence="1"/>
<dbReference type="EMBL" id="CP000572">
    <property type="protein sequence ID" value="ABN91763.1"/>
    <property type="molecule type" value="Genomic_DNA"/>
</dbReference>
<dbReference type="RefSeq" id="WP_004193249.1">
    <property type="nucleotide sequence ID" value="NC_009076.1"/>
</dbReference>
<dbReference type="SMR" id="A3NWX6"/>
<dbReference type="KEGG" id="bpl:BURPS1106A_2594"/>
<dbReference type="HOGENOM" id="CLU_015486_0_2_4"/>
<dbReference type="UniPathway" id="UPA00655">
    <property type="reaction ID" value="UER00711"/>
</dbReference>
<dbReference type="Proteomes" id="UP000006738">
    <property type="component" value="Chromosome I"/>
</dbReference>
<dbReference type="GO" id="GO:0009317">
    <property type="term" value="C:acetyl-CoA carboxylase complex"/>
    <property type="evidence" value="ECO:0007669"/>
    <property type="project" value="InterPro"/>
</dbReference>
<dbReference type="GO" id="GO:0003989">
    <property type="term" value="F:acetyl-CoA carboxylase activity"/>
    <property type="evidence" value="ECO:0007669"/>
    <property type="project" value="InterPro"/>
</dbReference>
<dbReference type="GO" id="GO:0005524">
    <property type="term" value="F:ATP binding"/>
    <property type="evidence" value="ECO:0007669"/>
    <property type="project" value="UniProtKB-KW"/>
</dbReference>
<dbReference type="GO" id="GO:0016743">
    <property type="term" value="F:carboxyl- or carbamoyltransferase activity"/>
    <property type="evidence" value="ECO:0007669"/>
    <property type="project" value="UniProtKB-UniRule"/>
</dbReference>
<dbReference type="GO" id="GO:0006633">
    <property type="term" value="P:fatty acid biosynthetic process"/>
    <property type="evidence" value="ECO:0007669"/>
    <property type="project" value="UniProtKB-KW"/>
</dbReference>
<dbReference type="GO" id="GO:2001295">
    <property type="term" value="P:malonyl-CoA biosynthetic process"/>
    <property type="evidence" value="ECO:0007669"/>
    <property type="project" value="UniProtKB-UniRule"/>
</dbReference>
<dbReference type="Gene3D" id="3.90.226.10">
    <property type="entry name" value="2-enoyl-CoA Hydratase, Chain A, domain 1"/>
    <property type="match status" value="1"/>
</dbReference>
<dbReference type="HAMAP" id="MF_00823">
    <property type="entry name" value="AcetylCoA_CT_alpha"/>
    <property type="match status" value="1"/>
</dbReference>
<dbReference type="InterPro" id="IPR001095">
    <property type="entry name" value="Acetyl_CoA_COase_a_su"/>
</dbReference>
<dbReference type="InterPro" id="IPR029045">
    <property type="entry name" value="ClpP/crotonase-like_dom_sf"/>
</dbReference>
<dbReference type="InterPro" id="IPR011763">
    <property type="entry name" value="COA_CT_C"/>
</dbReference>
<dbReference type="NCBIfam" id="TIGR00513">
    <property type="entry name" value="accA"/>
    <property type="match status" value="1"/>
</dbReference>
<dbReference type="NCBIfam" id="NF041504">
    <property type="entry name" value="AccA_sub"/>
    <property type="match status" value="1"/>
</dbReference>
<dbReference type="NCBIfam" id="NF004344">
    <property type="entry name" value="PRK05724.1"/>
    <property type="match status" value="1"/>
</dbReference>
<dbReference type="PANTHER" id="PTHR42853">
    <property type="entry name" value="ACETYL-COENZYME A CARBOXYLASE CARBOXYL TRANSFERASE SUBUNIT ALPHA"/>
    <property type="match status" value="1"/>
</dbReference>
<dbReference type="PANTHER" id="PTHR42853:SF3">
    <property type="entry name" value="ACETYL-COENZYME A CARBOXYLASE CARBOXYL TRANSFERASE SUBUNIT ALPHA, CHLOROPLASTIC"/>
    <property type="match status" value="1"/>
</dbReference>
<dbReference type="Pfam" id="PF03255">
    <property type="entry name" value="ACCA"/>
    <property type="match status" value="1"/>
</dbReference>
<dbReference type="PRINTS" id="PR01069">
    <property type="entry name" value="ACCCTRFRASEA"/>
</dbReference>
<dbReference type="SUPFAM" id="SSF52096">
    <property type="entry name" value="ClpP/crotonase"/>
    <property type="match status" value="1"/>
</dbReference>
<dbReference type="PROSITE" id="PS50989">
    <property type="entry name" value="COA_CT_CTER"/>
    <property type="match status" value="1"/>
</dbReference>
<sequence length="323" mass="35667">MKTTFLDFEQPIAELEAKIEELRFVQDDSAVDISEEIERLSKKSQQLTKDLYANLTPWQVSQIARHPQRPYTLDYVSELFTDFHELHGDRAFADDQSIVGGLARFNGHACMVIGHQKGRDTKERAARNFGMPRPEGYRKAERLMRVAEKFGLPIFTFVDTPGAYPGVGAEERGQSEAIGHNLYVMAELKTPIIATVIGEGGSGGALAIAVADTVMMLQFSTYSVISPEGCASILWKSAAKAPEAAEALGLTAHRLKALGLIDKIVNEPLGGAHRDPKGMAALLRRALGDSLRQFQGMSVDALRERRFERLMAYGKFKETTPRA</sequence>